<evidence type="ECO:0000255" key="1">
    <source>
        <dbReference type="HAMAP-Rule" id="MF_00075"/>
    </source>
</evidence>
<gene>
    <name evidence="1" type="primary">infA</name>
    <name type="ordered locus">cgR_0679</name>
</gene>
<reference key="1">
    <citation type="journal article" date="2007" name="Microbiology">
        <title>Comparative analysis of the Corynebacterium glutamicum group and complete genome sequence of strain R.</title>
        <authorList>
            <person name="Yukawa H."/>
            <person name="Omumasaba C.A."/>
            <person name="Nonaka H."/>
            <person name="Kos P."/>
            <person name="Okai N."/>
            <person name="Suzuki N."/>
            <person name="Suda M."/>
            <person name="Tsuge Y."/>
            <person name="Watanabe J."/>
            <person name="Ikeda Y."/>
            <person name="Vertes A.A."/>
            <person name="Inui M."/>
        </authorList>
    </citation>
    <scope>NUCLEOTIDE SEQUENCE [LARGE SCALE GENOMIC DNA]</scope>
    <source>
        <strain>R</strain>
    </source>
</reference>
<accession>A4QBQ3</accession>
<sequence length="72" mass="8375">MAKEGAIEVEGRIVEPLPNAMFRVELDNGHKVLAHISGKMRQHYIRILPEDRVVVELSPYDLTRGRIVYRYK</sequence>
<protein>
    <recommendedName>
        <fullName evidence="1">Translation initiation factor IF-1</fullName>
    </recommendedName>
</protein>
<organism>
    <name type="scientific">Corynebacterium glutamicum (strain R)</name>
    <dbReference type="NCBI Taxonomy" id="340322"/>
    <lineage>
        <taxon>Bacteria</taxon>
        <taxon>Bacillati</taxon>
        <taxon>Actinomycetota</taxon>
        <taxon>Actinomycetes</taxon>
        <taxon>Mycobacteriales</taxon>
        <taxon>Corynebacteriaceae</taxon>
        <taxon>Corynebacterium</taxon>
    </lineage>
</organism>
<keyword id="KW-0963">Cytoplasm</keyword>
<keyword id="KW-0396">Initiation factor</keyword>
<keyword id="KW-0648">Protein biosynthesis</keyword>
<keyword id="KW-0694">RNA-binding</keyword>
<keyword id="KW-0699">rRNA-binding</keyword>
<name>IF1_CORGB</name>
<feature type="chain" id="PRO_0000338810" description="Translation initiation factor IF-1">
    <location>
        <begin position="1"/>
        <end position="72"/>
    </location>
</feature>
<feature type="domain" description="S1-like" evidence="1">
    <location>
        <begin position="1"/>
        <end position="72"/>
    </location>
</feature>
<dbReference type="EMBL" id="AP009044">
    <property type="protein sequence ID" value="BAF53650.1"/>
    <property type="molecule type" value="Genomic_DNA"/>
</dbReference>
<dbReference type="RefSeq" id="WP_003854422.1">
    <property type="nucleotide sequence ID" value="NC_009342.1"/>
</dbReference>
<dbReference type="SMR" id="A4QBQ3"/>
<dbReference type="GeneID" id="92759275"/>
<dbReference type="KEGG" id="cgt:cgR_0679"/>
<dbReference type="HOGENOM" id="CLU_151267_1_0_11"/>
<dbReference type="PhylomeDB" id="A4QBQ3"/>
<dbReference type="Proteomes" id="UP000006698">
    <property type="component" value="Chromosome"/>
</dbReference>
<dbReference type="GO" id="GO:0005829">
    <property type="term" value="C:cytosol"/>
    <property type="evidence" value="ECO:0007669"/>
    <property type="project" value="TreeGrafter"/>
</dbReference>
<dbReference type="GO" id="GO:0043022">
    <property type="term" value="F:ribosome binding"/>
    <property type="evidence" value="ECO:0007669"/>
    <property type="project" value="UniProtKB-UniRule"/>
</dbReference>
<dbReference type="GO" id="GO:0019843">
    <property type="term" value="F:rRNA binding"/>
    <property type="evidence" value="ECO:0007669"/>
    <property type="project" value="UniProtKB-UniRule"/>
</dbReference>
<dbReference type="GO" id="GO:0003743">
    <property type="term" value="F:translation initiation factor activity"/>
    <property type="evidence" value="ECO:0007669"/>
    <property type="project" value="UniProtKB-UniRule"/>
</dbReference>
<dbReference type="CDD" id="cd04451">
    <property type="entry name" value="S1_IF1"/>
    <property type="match status" value="1"/>
</dbReference>
<dbReference type="FunFam" id="2.40.50.140:FF:000002">
    <property type="entry name" value="Translation initiation factor IF-1"/>
    <property type="match status" value="1"/>
</dbReference>
<dbReference type="Gene3D" id="2.40.50.140">
    <property type="entry name" value="Nucleic acid-binding proteins"/>
    <property type="match status" value="1"/>
</dbReference>
<dbReference type="HAMAP" id="MF_00075">
    <property type="entry name" value="IF_1"/>
    <property type="match status" value="1"/>
</dbReference>
<dbReference type="InterPro" id="IPR012340">
    <property type="entry name" value="NA-bd_OB-fold"/>
</dbReference>
<dbReference type="InterPro" id="IPR006196">
    <property type="entry name" value="RNA-binding_domain_S1_IF1"/>
</dbReference>
<dbReference type="InterPro" id="IPR003029">
    <property type="entry name" value="S1_domain"/>
</dbReference>
<dbReference type="InterPro" id="IPR004368">
    <property type="entry name" value="TIF_IF1"/>
</dbReference>
<dbReference type="NCBIfam" id="TIGR00008">
    <property type="entry name" value="infA"/>
    <property type="match status" value="1"/>
</dbReference>
<dbReference type="PANTHER" id="PTHR33370">
    <property type="entry name" value="TRANSLATION INITIATION FACTOR IF-1, CHLOROPLASTIC"/>
    <property type="match status" value="1"/>
</dbReference>
<dbReference type="PANTHER" id="PTHR33370:SF1">
    <property type="entry name" value="TRANSLATION INITIATION FACTOR IF-1, CHLOROPLASTIC"/>
    <property type="match status" value="1"/>
</dbReference>
<dbReference type="Pfam" id="PF01176">
    <property type="entry name" value="eIF-1a"/>
    <property type="match status" value="1"/>
</dbReference>
<dbReference type="SMART" id="SM00316">
    <property type="entry name" value="S1"/>
    <property type="match status" value="1"/>
</dbReference>
<dbReference type="SUPFAM" id="SSF50249">
    <property type="entry name" value="Nucleic acid-binding proteins"/>
    <property type="match status" value="1"/>
</dbReference>
<dbReference type="PROSITE" id="PS50832">
    <property type="entry name" value="S1_IF1_TYPE"/>
    <property type="match status" value="1"/>
</dbReference>
<comment type="function">
    <text evidence="1">One of the essential components for the initiation of protein synthesis. Stabilizes the binding of IF-2 and IF-3 on the 30S subunit to which N-formylmethionyl-tRNA(fMet) subsequently binds. Helps modulate mRNA selection, yielding the 30S pre-initiation complex (PIC). Upon addition of the 50S ribosomal subunit IF-1, IF-2 and IF-3 are released leaving the mature 70S translation initiation complex.</text>
</comment>
<comment type="subunit">
    <text evidence="1">Component of the 30S ribosomal translation pre-initiation complex which assembles on the 30S ribosome in the order IF-2 and IF-3, IF-1 and N-formylmethionyl-tRNA(fMet); mRNA recruitment can occur at any time during PIC assembly.</text>
</comment>
<comment type="subcellular location">
    <subcellularLocation>
        <location evidence="1">Cytoplasm</location>
    </subcellularLocation>
</comment>
<comment type="similarity">
    <text evidence="1">Belongs to the IF-1 family.</text>
</comment>
<proteinExistence type="inferred from homology"/>